<keyword id="KW-0010">Activator</keyword>
<keyword id="KW-0183">Conidiation</keyword>
<keyword id="KW-0539">Nucleus</keyword>
<keyword id="KW-1185">Reference proteome</keyword>
<keyword id="KW-0749">Sporulation</keyword>
<keyword id="KW-0804">Transcription</keyword>
<keyword id="KW-0805">Transcription regulation</keyword>
<reference key="1">
    <citation type="journal article" date="2007" name="Science">
        <title>The Fusarium graminearum genome reveals a link between localized polymorphism and pathogen specialization.</title>
        <authorList>
            <person name="Cuomo C.A."/>
            <person name="Gueldener U."/>
            <person name="Xu J.-R."/>
            <person name="Trail F."/>
            <person name="Turgeon B.G."/>
            <person name="Di Pietro A."/>
            <person name="Walton J.D."/>
            <person name="Ma L.-J."/>
            <person name="Baker S.E."/>
            <person name="Rep M."/>
            <person name="Adam G."/>
            <person name="Antoniw J."/>
            <person name="Baldwin T."/>
            <person name="Calvo S.E."/>
            <person name="Chang Y.-L."/>
            <person name="DeCaprio D."/>
            <person name="Gale L.R."/>
            <person name="Gnerre S."/>
            <person name="Goswami R.S."/>
            <person name="Hammond-Kosack K."/>
            <person name="Harris L.J."/>
            <person name="Hilburn K."/>
            <person name="Kennell J.C."/>
            <person name="Kroken S."/>
            <person name="Magnuson J.K."/>
            <person name="Mannhaupt G."/>
            <person name="Mauceli E.W."/>
            <person name="Mewes H.-W."/>
            <person name="Mitterbauer R."/>
            <person name="Muehlbauer G."/>
            <person name="Muensterkoetter M."/>
            <person name="Nelson D."/>
            <person name="O'Donnell K."/>
            <person name="Ouellet T."/>
            <person name="Qi W."/>
            <person name="Quesneville H."/>
            <person name="Roncero M.I.G."/>
            <person name="Seong K.-Y."/>
            <person name="Tetko I.V."/>
            <person name="Urban M."/>
            <person name="Waalwijk C."/>
            <person name="Ward T.J."/>
            <person name="Yao J."/>
            <person name="Birren B.W."/>
            <person name="Kistler H.C."/>
        </authorList>
    </citation>
    <scope>NUCLEOTIDE SEQUENCE [LARGE SCALE GENOMIC DNA]</scope>
    <source>
        <strain>ATCC MYA-4620 / CBS 123657 / FGSC 9075 / NRRL 31084 / PH-1</strain>
    </source>
</reference>
<reference key="2">
    <citation type="journal article" date="2010" name="Nature">
        <title>Comparative genomics reveals mobile pathogenicity chromosomes in Fusarium.</title>
        <authorList>
            <person name="Ma L.-J."/>
            <person name="van der Does H.C."/>
            <person name="Borkovich K.A."/>
            <person name="Coleman J.J."/>
            <person name="Daboussi M.-J."/>
            <person name="Di Pietro A."/>
            <person name="Dufresne M."/>
            <person name="Freitag M."/>
            <person name="Grabherr M."/>
            <person name="Henrissat B."/>
            <person name="Houterman P.M."/>
            <person name="Kang S."/>
            <person name="Shim W.-B."/>
            <person name="Woloshuk C."/>
            <person name="Xie X."/>
            <person name="Xu J.-R."/>
            <person name="Antoniw J."/>
            <person name="Baker S.E."/>
            <person name="Bluhm B.H."/>
            <person name="Breakspear A."/>
            <person name="Brown D.W."/>
            <person name="Butchko R.A.E."/>
            <person name="Chapman S."/>
            <person name="Coulson R."/>
            <person name="Coutinho P.M."/>
            <person name="Danchin E.G.J."/>
            <person name="Diener A."/>
            <person name="Gale L.R."/>
            <person name="Gardiner D.M."/>
            <person name="Goff S."/>
            <person name="Hammond-Kosack K.E."/>
            <person name="Hilburn K."/>
            <person name="Hua-Van A."/>
            <person name="Jonkers W."/>
            <person name="Kazan K."/>
            <person name="Kodira C.D."/>
            <person name="Koehrsen M."/>
            <person name="Kumar L."/>
            <person name="Lee Y.-H."/>
            <person name="Li L."/>
            <person name="Manners J.M."/>
            <person name="Miranda-Saavedra D."/>
            <person name="Mukherjee M."/>
            <person name="Park G."/>
            <person name="Park J."/>
            <person name="Park S.-Y."/>
            <person name="Proctor R.H."/>
            <person name="Regev A."/>
            <person name="Ruiz-Roldan M.C."/>
            <person name="Sain D."/>
            <person name="Sakthikumar S."/>
            <person name="Sykes S."/>
            <person name="Schwartz D.C."/>
            <person name="Turgeon B.G."/>
            <person name="Wapinski I."/>
            <person name="Yoder O."/>
            <person name="Young S."/>
            <person name="Zeng Q."/>
            <person name="Zhou S."/>
            <person name="Galagan J."/>
            <person name="Cuomo C.A."/>
            <person name="Kistler H.C."/>
            <person name="Rep M."/>
        </authorList>
    </citation>
    <scope>GENOME REANNOTATION</scope>
    <source>
        <strain>ATCC MYA-4620 / CBS 123657 / FGSC 9075 / NRRL 31084 / PH-1</strain>
    </source>
</reference>
<reference key="3">
    <citation type="journal article" date="2015" name="BMC Genomics">
        <title>The completed genome sequence of the pathogenic ascomycete fungus Fusarium graminearum.</title>
        <authorList>
            <person name="King R."/>
            <person name="Urban M."/>
            <person name="Hammond-Kosack M.C.U."/>
            <person name="Hassani-Pak K."/>
            <person name="Hammond-Kosack K.E."/>
        </authorList>
    </citation>
    <scope>NUCLEOTIDE SEQUENCE [LARGE SCALE GENOMIC DNA]</scope>
    <source>
        <strain>ATCC MYA-4620 / CBS 123657 / FGSC 9075 / NRRL 31084 / PH-1</strain>
    </source>
</reference>
<reference key="4">
    <citation type="journal article" date="2013" name="PLoS ONE">
        <title>AbaA regulates conidiogenesis in the ascomycete fungus Fusarium graminearum.</title>
        <authorList>
            <person name="Son H."/>
            <person name="Kim M.G."/>
            <person name="Min K."/>
            <person name="Seo Y.S."/>
            <person name="Lim J.Y."/>
            <person name="Choi G.J."/>
            <person name="Kim J.C."/>
            <person name="Chae S.K."/>
            <person name="Lee Y.W."/>
        </authorList>
    </citation>
    <scope>NUCLEOTIDE SEQUENCE [MRNA] OF 76-858</scope>
    <scope>FUNCTION</scope>
    <scope>DISRUPTION PHENOTYPE</scope>
    <scope>SUBCELLULAR LOCATION</scope>
    <source>
        <strain>ATCC MYA-4620 / CBS 123657 / FGSC 9075 / NRRL 31084 / PH-1</strain>
    </source>
</reference>
<reference key="5">
    <citation type="journal article" date="2014" name="J. Microbiol.">
        <title>FgFlbD regulates hyphal differentiation required for sexual and asexual reproduction in the ascomycete fungus Fusarium graminearum.</title>
        <authorList>
            <person name="Son H."/>
            <person name="Kim M.G."/>
            <person name="Chae S.K."/>
            <person name="Lee Y.W."/>
        </authorList>
    </citation>
    <scope>INDUCTION</scope>
</reference>
<protein>
    <recommendedName>
        <fullName evidence="8">Conidiophore development regulator abaA</fullName>
    </recommendedName>
</protein>
<evidence type="ECO:0000250" key="1">
    <source>
        <dbReference type="UniProtKB" id="P20945"/>
    </source>
</evidence>
<evidence type="ECO:0000255" key="2">
    <source>
        <dbReference type="PROSITE-ProRule" id="PRU00505"/>
    </source>
</evidence>
<evidence type="ECO:0000255" key="3">
    <source>
        <dbReference type="PROSITE-ProRule" id="PRU00768"/>
    </source>
</evidence>
<evidence type="ECO:0000256" key="4">
    <source>
        <dbReference type="SAM" id="MobiDB-lite"/>
    </source>
</evidence>
<evidence type="ECO:0000269" key="5">
    <source>
    </source>
</evidence>
<evidence type="ECO:0000269" key="6">
    <source>
    </source>
</evidence>
<evidence type="ECO:0000303" key="7">
    <source>
    </source>
</evidence>
<evidence type="ECO:0000305" key="8"/>
<sequence>MSSSLYHPRPVLSSQRYTPSPDYLQDARRTYHDNSRLPLRETASNAQSHNFNSMVPCYSSQVGISPSVPASLPAPMIPSQSFECLYRVPTPRNQPRFQQRRPRNEVNPLYFWPAFRQYRNRQAHKDTQKDKGGVWRRPELEDAFVDSVLLMPHMGRRKFSMGGKLHGRNMLISEYIFTICVAILGSKEIFRIDNSNDSIEQMGRKQVSSHMQVVKKFFEDLRCFHFLFPAEEKKEPGSTNSDDYYDEEEQESFKSNPVLTALAEGRVPDVKPNYEYFSQLLALQSLISVRPKTAEVYVSSSEVKFRDEIAYDAQDAPLDTESFPHLNKYNNCDDSPSVLGKDVLLHEYTRSLDRTTSACVKTVTRRWQKDAPEIYETLELPTRDEECLLLEMCATLELHEHARFPSGSELTGFVEVAITNPNLQSHRWKCVTRLTRPSELHSDDKKSSVYTNETGIHRRGCSDSKPDCDCHSRPRQDIHVPFPAVEWASILSMAVQYPDVEHQRKKEKRTKGDDRKNLDRAGSKRKRSEDDGDAASWARRDLTGSDLICKVAMYQELWSCAPDSNRWVRQGIVFWRFNTTNQWYKYNPVFKPAGTSWRWLTVNDPMSRYHQQKALVYPSASMSLDSIMSPTPSINQHMTAAMNETFSSAWDPSVSLAQVPNATATNNGLTLFESFSGGLATPPPTAGLQGSYSGSFDHGMPPSTGVGFIPSTCSTAGESHPGTGHGHSHSAAYYDAQTTLADLKPVMSTVNPYQSPTTSSGLDLSSSLVYDNAECDTGLQGWDMPALDGWSTGAGSGSEWGSHHKVEPSSDQTALWTQSQWAQMAGDRDGSPRPMKRRRGDGIDSHIPPTMTAAAGGW</sequence>
<feature type="chain" id="PRO_0000435936" description="Conidiophore development regulator abaA">
    <location>
        <begin position="1"/>
        <end position="858"/>
    </location>
</feature>
<feature type="DNA-binding region" description="TEA" evidence="2">
    <location>
        <begin position="128"/>
        <end position="221"/>
    </location>
</feature>
<feature type="region of interest" description="Disordered" evidence="4">
    <location>
        <begin position="1"/>
        <end position="22"/>
    </location>
</feature>
<feature type="region of interest" description="Disordered" evidence="4">
    <location>
        <begin position="500"/>
        <end position="535"/>
    </location>
</feature>
<feature type="region of interest" description="Disordered" evidence="4">
    <location>
        <begin position="792"/>
        <end position="858"/>
    </location>
</feature>
<feature type="short sequence motif" description="Nuclear localization signal" evidence="3">
    <location>
        <begin position="514"/>
        <end position="521"/>
    </location>
</feature>
<feature type="compositionally biased region" description="Basic and acidic residues" evidence="4">
    <location>
        <begin position="500"/>
        <end position="522"/>
    </location>
</feature>
<feature type="compositionally biased region" description="Polar residues" evidence="4">
    <location>
        <begin position="809"/>
        <end position="822"/>
    </location>
</feature>
<feature type="sequence conflict" description="In Ref. 4; AGQ43489." evidence="8" ref="4">
    <original>E</original>
    <variation>K</variation>
    <location>
        <position position="219"/>
    </location>
</feature>
<name>ABAA_GIBZE</name>
<organism>
    <name type="scientific">Gibberella zeae (strain ATCC MYA-4620 / CBS 123657 / FGSC 9075 / NRRL 31084 / PH-1)</name>
    <name type="common">Wheat head blight fungus</name>
    <name type="synonym">Fusarium graminearum</name>
    <dbReference type="NCBI Taxonomy" id="229533"/>
    <lineage>
        <taxon>Eukaryota</taxon>
        <taxon>Fungi</taxon>
        <taxon>Dikarya</taxon>
        <taxon>Ascomycota</taxon>
        <taxon>Pezizomycotina</taxon>
        <taxon>Sordariomycetes</taxon>
        <taxon>Hypocreomycetidae</taxon>
        <taxon>Hypocreales</taxon>
        <taxon>Nectriaceae</taxon>
        <taxon>Fusarium</taxon>
    </lineage>
</organism>
<gene>
    <name evidence="7" type="primary">abaA</name>
    <name type="ORF">FGRAMPH1_01T02219</name>
    <name type="ORF">FGRRES_15794/FGRRES_11850</name>
    <name type="ORF">FGSG_11851/FGSG_11850</name>
</gene>
<dbReference type="EMBL" id="DS231663">
    <property type="protein sequence ID" value="ESU06130.1"/>
    <property type="status" value="ALT_SEQ"/>
    <property type="molecule type" value="Genomic_DNA"/>
</dbReference>
<dbReference type="EMBL" id="DS231663">
    <property type="protein sequence ID" value="ESU06131.1"/>
    <property type="status" value="ALT_SEQ"/>
    <property type="molecule type" value="Genomic_DNA"/>
</dbReference>
<dbReference type="EMBL" id="HG970332">
    <property type="protein sequence ID" value="SCB64136.1"/>
    <property type="status" value="ALT_INIT"/>
    <property type="molecule type" value="Genomic_DNA"/>
</dbReference>
<dbReference type="EMBL" id="KC825340">
    <property type="protein sequence ID" value="AGQ43489.1"/>
    <property type="status" value="ALT_FRAME"/>
    <property type="molecule type" value="mRNA"/>
</dbReference>
<dbReference type="RefSeq" id="XP_011316615.1">
    <property type="nucleotide sequence ID" value="XM_011318313.1"/>
</dbReference>
<dbReference type="RefSeq" id="XP_011316616.1">
    <property type="nucleotide sequence ID" value="XM_011318314.1"/>
</dbReference>
<dbReference type="SMR" id="I1S4T3"/>
<dbReference type="STRING" id="229533.I1S4T3"/>
<dbReference type="KEGG" id="fgr:FGSG_11850"/>
<dbReference type="KEGG" id="fgr:FGSG_11851"/>
<dbReference type="eggNOG" id="KOG0110">
    <property type="taxonomic scope" value="Eukaryota"/>
</dbReference>
<dbReference type="HOGENOM" id="CLU_2164355_0_0_1"/>
<dbReference type="InParanoid" id="I1S4T3"/>
<dbReference type="OrthoDB" id="8689at110618"/>
<dbReference type="PHI-base" id="PHI:3828"/>
<dbReference type="Proteomes" id="UP000070720">
    <property type="component" value="Chromosome 1"/>
</dbReference>
<dbReference type="GO" id="GO:0005634">
    <property type="term" value="C:nucleus"/>
    <property type="evidence" value="ECO:0007669"/>
    <property type="project" value="UniProtKB-SubCell"/>
</dbReference>
<dbReference type="GO" id="GO:0005667">
    <property type="term" value="C:transcription regulator complex"/>
    <property type="evidence" value="ECO:0007669"/>
    <property type="project" value="TreeGrafter"/>
</dbReference>
<dbReference type="GO" id="GO:0000981">
    <property type="term" value="F:DNA-binding transcription factor activity, RNA polymerase II-specific"/>
    <property type="evidence" value="ECO:0007669"/>
    <property type="project" value="TreeGrafter"/>
</dbReference>
<dbReference type="GO" id="GO:0000978">
    <property type="term" value="F:RNA polymerase II cis-regulatory region sequence-specific DNA binding"/>
    <property type="evidence" value="ECO:0007669"/>
    <property type="project" value="TreeGrafter"/>
</dbReference>
<dbReference type="GO" id="GO:0048315">
    <property type="term" value="P:conidium formation"/>
    <property type="evidence" value="ECO:0007669"/>
    <property type="project" value="UniProtKB-KW"/>
</dbReference>
<dbReference type="GO" id="GO:0030435">
    <property type="term" value="P:sporulation resulting in formation of a cellular spore"/>
    <property type="evidence" value="ECO:0007669"/>
    <property type="project" value="UniProtKB-KW"/>
</dbReference>
<dbReference type="Gene3D" id="6.10.20.40">
    <property type="entry name" value="TEA/ATTS domain"/>
    <property type="match status" value="1"/>
</dbReference>
<dbReference type="InterPro" id="IPR000818">
    <property type="entry name" value="TEA/ATTS_dom"/>
</dbReference>
<dbReference type="InterPro" id="IPR038096">
    <property type="entry name" value="TEA/ATTS_sf"/>
</dbReference>
<dbReference type="InterPro" id="IPR050937">
    <property type="entry name" value="TEC1_TEAD_TF"/>
</dbReference>
<dbReference type="PANTHER" id="PTHR11834:SF0">
    <property type="entry name" value="PROTEIN SCALLOPED"/>
    <property type="match status" value="1"/>
</dbReference>
<dbReference type="PANTHER" id="PTHR11834">
    <property type="entry name" value="TRANSCRIPTIONAL ENHANCER FACTOR TEF RELATED"/>
    <property type="match status" value="1"/>
</dbReference>
<dbReference type="Pfam" id="PF01285">
    <property type="entry name" value="TEA"/>
    <property type="match status" value="1"/>
</dbReference>
<dbReference type="SMART" id="SM00426">
    <property type="entry name" value="TEA"/>
    <property type="match status" value="1"/>
</dbReference>
<dbReference type="PROSITE" id="PS51088">
    <property type="entry name" value="TEA_2"/>
    <property type="match status" value="1"/>
</dbReference>
<accession>I1S4T3</accession>
<accession>A0A098D398</accession>
<accession>A0A098D4N6</accession>
<accession>A0A0E0RNT6</accession>
<accession>A0A1C3YIE9</accession>
<accession>A0A1I9EWX2</accession>
<accession>I1S4T2</accession>
<accession>S5FRT9</accession>
<proteinExistence type="evidence at transcript level"/>
<comment type="function">
    <text evidence="1 5">AbaA and wetA are pivotal regulators of conidiophore development and conidium maturation (By similarity). They act individually and together to regulate their own expression and that of numerous other sporulation-specific genes (By similarity). Binds to the sequence 5'-CATTCY-3', where Y is a pyrimidine, making both major- and minor-groove contacts (By similarity). Plays a pivotal role in conidiation by regulating cell cycle pathways and other conidiation-related genes (PubMed:24039821).</text>
</comment>
<comment type="subcellular location">
    <subcellularLocation>
        <location evidence="5">Nucleus</location>
    </subcellularLocation>
    <text evidence="5">localizes to the nuclei of phialides and terminal cells of mature conidia (PubMed:24039821).</text>
</comment>
<comment type="induction">
    <text evidence="6">Expression is positively regulated by flbD (PubMed:25277408).</text>
</comment>
<comment type="disruption phenotype">
    <text evidence="5">Leads to abnormally shaped phialides and abolishes production of conidia (PubMed:24039821).</text>
</comment>
<comment type="similarity">
    <text evidence="8">Belongs to the TEC1 family.</text>
</comment>
<comment type="sequence caution" evidence="8">
    <conflict type="frameshift">
        <sequence resource="EMBL-CDS" id="AGQ43489"/>
    </conflict>
</comment>
<comment type="sequence caution" evidence="8">
    <conflict type="erroneous gene model prediction">
        <sequence resource="EMBL-CDS" id="ESU06130"/>
    </conflict>
</comment>
<comment type="sequence caution" evidence="8">
    <conflict type="erroneous gene model prediction">
        <sequence resource="EMBL-CDS" id="ESU06131"/>
    </conflict>
</comment>
<comment type="sequence caution" evidence="8">
    <conflict type="erroneous initiation">
        <sequence resource="EMBL-CDS" id="SCB64136"/>
    </conflict>
    <text>Extended N-terminus.</text>
</comment>